<keyword id="KW-0002">3D-structure</keyword>
<keyword id="KW-0158">Chromosome</keyword>
<keyword id="KW-0238">DNA-binding</keyword>
<keyword id="KW-0539">Nucleus</keyword>
<keyword id="KW-1185">Reference proteome</keyword>
<keyword id="KW-0804">Transcription</keyword>
<keyword id="KW-0805">Transcription regulation</keyword>
<proteinExistence type="evidence at protein level"/>
<gene>
    <name type="primary">MBD5</name>
    <name type="ordered locus">At3g46580</name>
    <name type="ORF">F12A12.100</name>
</gene>
<feature type="chain" id="PRO_0000405281" description="Methyl-CpG-binding domain-containing protein 5">
    <location>
        <begin position="1"/>
        <end position="182"/>
    </location>
</feature>
<feature type="domain" description="MBD" evidence="2">
    <location>
        <begin position="25"/>
        <end position="101"/>
    </location>
</feature>
<feature type="region of interest" description="Disordered" evidence="3">
    <location>
        <begin position="1"/>
        <end position="56"/>
    </location>
</feature>
<feature type="region of interest" description="Disordered" evidence="3">
    <location>
        <begin position="80"/>
        <end position="126"/>
    </location>
</feature>
<feature type="compositionally biased region" description="Basic and acidic residues" evidence="3">
    <location>
        <begin position="92"/>
        <end position="105"/>
    </location>
</feature>
<feature type="compositionally biased region" description="Basic residues" evidence="3">
    <location>
        <begin position="106"/>
        <end position="115"/>
    </location>
</feature>
<feature type="sequence conflict" description="In Ref. 4; AAM63666." evidence="11" ref="4">
    <original>A</original>
    <variation>T</variation>
    <location>
        <position position="147"/>
    </location>
</feature>
<feature type="strand" evidence="12">
    <location>
        <begin position="40"/>
        <end position="46"/>
    </location>
</feature>
<feature type="turn" evidence="12">
    <location>
        <begin position="50"/>
        <end position="53"/>
    </location>
</feature>
<feature type="strand" evidence="12">
    <location>
        <begin position="55"/>
        <end position="60"/>
    </location>
</feature>
<feature type="turn" evidence="12">
    <location>
        <begin position="62"/>
        <end position="64"/>
    </location>
</feature>
<feature type="strand" evidence="12">
    <location>
        <begin position="67"/>
        <end position="70"/>
    </location>
</feature>
<feature type="helix" evidence="12">
    <location>
        <begin position="71"/>
        <end position="80"/>
    </location>
</feature>
<sequence>MSNGTDQAQPPPENPATPVDSKSRKRATPGDDNWLPPDWRTEIRVRTSGTKAGTVDKFYYEPITGRKFRSKNEVLYYLEHGTPKKKSVKTAENGDSHSEHSEGRGSARRQTKSNKKVTEPPPKPLNFDFLNVPEKVTWTGINGSEEAWLPFIGDYKIQESVSQDWDRVFTLVTSQNAGKTMF</sequence>
<accession>Q9SNC0</accession>
<accession>Q8LCG6</accession>
<comment type="function">
    <text evidence="4 6 7">Transcriptional regulator that binds CpG islands in promoters where the DNA is methylated at position 5 of cytosine within CpG dinucleotides. In addition, binds specifically methylated m(5)CpNpN but not m(5)CpNpG (N is A, T or C). Plays probably a role in gene silencing.</text>
</comment>
<comment type="subunit">
    <text evidence="8 10">Homodimer and heterodimer with MBD6. Interacts with DDM1 via its MBD domain.</text>
</comment>
<comment type="subcellular location">
    <subcellularLocation>
        <location evidence="6 7 8 9 10">Nucleus</location>
    </subcellularLocation>
    <subcellularLocation>
        <location evidence="7 8 9">Chromosome</location>
    </subcellularLocation>
    <text evidence="7 8 9">Associated with heterochromatin, and particularly at perinucleolar chromocenters.</text>
</comment>
<comment type="tissue specificity">
    <text evidence="5 6 7">Mostly expressed in flowers, and, to a lower extent, in seedlings, buds, stems and mature seeds, but barely in roots, exclusively in root meristem cells at tips (at protein level).</text>
</comment>
<comment type="domain">
    <text evidence="1">The methyl-CpG-binding domain (MBD) functions both in binding to methylated DNA and in protein interactions.</text>
</comment>
<evidence type="ECO:0000250" key="1"/>
<evidence type="ECO:0000255" key="2">
    <source>
        <dbReference type="PROSITE-ProRule" id="PRU00338"/>
    </source>
</evidence>
<evidence type="ECO:0000256" key="3">
    <source>
        <dbReference type="SAM" id="MobiDB-lite"/>
    </source>
</evidence>
<evidence type="ECO:0000269" key="4">
    <source>
    </source>
</evidence>
<evidence type="ECO:0000269" key="5">
    <source>
    </source>
</evidence>
<evidence type="ECO:0000269" key="6">
    <source>
    </source>
</evidence>
<evidence type="ECO:0000269" key="7">
    <source>
    </source>
</evidence>
<evidence type="ECO:0000269" key="8">
    <source>
    </source>
</evidence>
<evidence type="ECO:0000269" key="9">
    <source>
    </source>
</evidence>
<evidence type="ECO:0000269" key="10">
    <source>
    </source>
</evidence>
<evidence type="ECO:0000305" key="11"/>
<evidence type="ECO:0007829" key="12">
    <source>
        <dbReference type="PDB" id="7FEO"/>
    </source>
</evidence>
<organism>
    <name type="scientific">Arabidopsis thaliana</name>
    <name type="common">Mouse-ear cress</name>
    <dbReference type="NCBI Taxonomy" id="3702"/>
    <lineage>
        <taxon>Eukaryota</taxon>
        <taxon>Viridiplantae</taxon>
        <taxon>Streptophyta</taxon>
        <taxon>Embryophyta</taxon>
        <taxon>Tracheophyta</taxon>
        <taxon>Spermatophyta</taxon>
        <taxon>Magnoliopsida</taxon>
        <taxon>eudicotyledons</taxon>
        <taxon>Gunneridae</taxon>
        <taxon>Pentapetalae</taxon>
        <taxon>rosids</taxon>
        <taxon>malvids</taxon>
        <taxon>Brassicales</taxon>
        <taxon>Brassicaceae</taxon>
        <taxon>Camelineae</taxon>
        <taxon>Arabidopsis</taxon>
    </lineage>
</organism>
<dbReference type="EMBL" id="AL133314">
    <property type="protein sequence ID" value="CAB62328.1"/>
    <property type="molecule type" value="Genomic_DNA"/>
</dbReference>
<dbReference type="EMBL" id="CP002686">
    <property type="protein sequence ID" value="AEE78174.1"/>
    <property type="molecule type" value="Genomic_DNA"/>
</dbReference>
<dbReference type="EMBL" id="AY063849">
    <property type="protein sequence ID" value="AAL36205.1"/>
    <property type="molecule type" value="mRNA"/>
</dbReference>
<dbReference type="EMBL" id="AY142653">
    <property type="protein sequence ID" value="AAN13191.1"/>
    <property type="molecule type" value="mRNA"/>
</dbReference>
<dbReference type="EMBL" id="AY086606">
    <property type="protein sequence ID" value="AAM63666.1"/>
    <property type="molecule type" value="mRNA"/>
</dbReference>
<dbReference type="PIR" id="T45595">
    <property type="entry name" value="T45595"/>
</dbReference>
<dbReference type="RefSeq" id="NP_190242.1">
    <property type="nucleotide sequence ID" value="NM_114525.3"/>
</dbReference>
<dbReference type="PDB" id="7FEO">
    <property type="method" value="X-ray"/>
    <property type="resolution" value="2.20 A"/>
    <property type="chains" value="A/B=28-98"/>
</dbReference>
<dbReference type="PDBsum" id="7FEO"/>
<dbReference type="SMR" id="Q9SNC0"/>
<dbReference type="BioGRID" id="9131">
    <property type="interactions" value="10"/>
</dbReference>
<dbReference type="FunCoup" id="Q9SNC0">
    <property type="interactions" value="617"/>
</dbReference>
<dbReference type="IntAct" id="Q9SNC0">
    <property type="interactions" value="7"/>
</dbReference>
<dbReference type="STRING" id="3702.Q9SNC0"/>
<dbReference type="iPTMnet" id="Q9SNC0"/>
<dbReference type="PaxDb" id="3702-AT3G46580.1"/>
<dbReference type="ProteomicsDB" id="238352"/>
<dbReference type="EnsemblPlants" id="AT3G46580.1">
    <property type="protein sequence ID" value="AT3G46580.1"/>
    <property type="gene ID" value="AT3G46580"/>
</dbReference>
<dbReference type="GeneID" id="823811"/>
<dbReference type="Gramene" id="AT3G46580.1">
    <property type="protein sequence ID" value="AT3G46580.1"/>
    <property type="gene ID" value="AT3G46580"/>
</dbReference>
<dbReference type="KEGG" id="ath:AT3G46580"/>
<dbReference type="Araport" id="AT3G46580"/>
<dbReference type="TAIR" id="AT3G46580">
    <property type="gene designation" value="MBD5"/>
</dbReference>
<dbReference type="eggNOG" id="KOG4161">
    <property type="taxonomic scope" value="Eukaryota"/>
</dbReference>
<dbReference type="HOGENOM" id="CLU_113092_0_0_1"/>
<dbReference type="InParanoid" id="Q9SNC0"/>
<dbReference type="OMA" id="TVDKFYY"/>
<dbReference type="OrthoDB" id="10072024at2759"/>
<dbReference type="PhylomeDB" id="Q9SNC0"/>
<dbReference type="PRO" id="PR:Q9SNC0"/>
<dbReference type="Proteomes" id="UP000006548">
    <property type="component" value="Chromosome 3"/>
</dbReference>
<dbReference type="ExpressionAtlas" id="Q9SNC0">
    <property type="expression patterns" value="baseline and differential"/>
</dbReference>
<dbReference type="GO" id="GO:0000792">
    <property type="term" value="C:heterochromatin"/>
    <property type="evidence" value="ECO:0000314"/>
    <property type="project" value="UniProtKB"/>
</dbReference>
<dbReference type="GO" id="GO:0005634">
    <property type="term" value="C:nucleus"/>
    <property type="evidence" value="ECO:0000314"/>
    <property type="project" value="UniProtKB"/>
</dbReference>
<dbReference type="GO" id="GO:0010370">
    <property type="term" value="C:perinucleolar chromocenter"/>
    <property type="evidence" value="ECO:0000314"/>
    <property type="project" value="TAIR"/>
</dbReference>
<dbReference type="GO" id="GO:0019899">
    <property type="term" value="F:enzyme binding"/>
    <property type="evidence" value="ECO:0000353"/>
    <property type="project" value="UniProtKB"/>
</dbReference>
<dbReference type="GO" id="GO:0008327">
    <property type="term" value="F:methyl-CpG binding"/>
    <property type="evidence" value="ECO:0000314"/>
    <property type="project" value="TAIR"/>
</dbReference>
<dbReference type="CDD" id="cd01396">
    <property type="entry name" value="MeCP2_MBD"/>
    <property type="match status" value="1"/>
</dbReference>
<dbReference type="FunFam" id="3.30.890.10:FF:000015">
    <property type="entry name" value="Methyl-CpG-binding domain-containing protein 5"/>
    <property type="match status" value="1"/>
</dbReference>
<dbReference type="Gene3D" id="3.30.890.10">
    <property type="entry name" value="Methyl-cpg-binding Protein 2, Chain A"/>
    <property type="match status" value="1"/>
</dbReference>
<dbReference type="InterPro" id="IPR016177">
    <property type="entry name" value="DNA-bd_dom_sf"/>
</dbReference>
<dbReference type="InterPro" id="IPR001739">
    <property type="entry name" value="Methyl_CpG_DNA-bd"/>
</dbReference>
<dbReference type="PANTHER" id="PTHR12396">
    <property type="entry name" value="METHYL-CPG BINDING PROTEIN, MBD"/>
    <property type="match status" value="1"/>
</dbReference>
<dbReference type="PANTHER" id="PTHR12396:SF59">
    <property type="entry name" value="METHYL-CPG-BINDING DOMAIN-CONTAINING PROTEIN 5"/>
    <property type="match status" value="1"/>
</dbReference>
<dbReference type="Pfam" id="PF01429">
    <property type="entry name" value="MBD"/>
    <property type="match status" value="1"/>
</dbReference>
<dbReference type="SUPFAM" id="SSF54171">
    <property type="entry name" value="DNA-binding domain"/>
    <property type="match status" value="1"/>
</dbReference>
<dbReference type="PROSITE" id="PS50982">
    <property type="entry name" value="MBD"/>
    <property type="match status" value="1"/>
</dbReference>
<reference key="1">
    <citation type="journal article" date="2000" name="Nature">
        <title>Sequence and analysis of chromosome 3 of the plant Arabidopsis thaliana.</title>
        <authorList>
            <person name="Salanoubat M."/>
            <person name="Lemcke K."/>
            <person name="Rieger M."/>
            <person name="Ansorge W."/>
            <person name="Unseld M."/>
            <person name="Fartmann B."/>
            <person name="Valle G."/>
            <person name="Bloecker H."/>
            <person name="Perez-Alonso M."/>
            <person name="Obermaier B."/>
            <person name="Delseny M."/>
            <person name="Boutry M."/>
            <person name="Grivell L.A."/>
            <person name="Mache R."/>
            <person name="Puigdomenech P."/>
            <person name="De Simone V."/>
            <person name="Choisne N."/>
            <person name="Artiguenave F."/>
            <person name="Robert C."/>
            <person name="Brottier P."/>
            <person name="Wincker P."/>
            <person name="Cattolico L."/>
            <person name="Weissenbach J."/>
            <person name="Saurin W."/>
            <person name="Quetier F."/>
            <person name="Schaefer M."/>
            <person name="Mueller-Auer S."/>
            <person name="Gabel C."/>
            <person name="Fuchs M."/>
            <person name="Benes V."/>
            <person name="Wurmbach E."/>
            <person name="Drzonek H."/>
            <person name="Erfle H."/>
            <person name="Jordan N."/>
            <person name="Bangert S."/>
            <person name="Wiedelmann R."/>
            <person name="Kranz H."/>
            <person name="Voss H."/>
            <person name="Holland R."/>
            <person name="Brandt P."/>
            <person name="Nyakatura G."/>
            <person name="Vezzi A."/>
            <person name="D'Angelo M."/>
            <person name="Pallavicini A."/>
            <person name="Toppo S."/>
            <person name="Simionati B."/>
            <person name="Conrad A."/>
            <person name="Hornischer K."/>
            <person name="Kauer G."/>
            <person name="Loehnert T.-H."/>
            <person name="Nordsiek G."/>
            <person name="Reichelt J."/>
            <person name="Scharfe M."/>
            <person name="Schoen O."/>
            <person name="Bargues M."/>
            <person name="Terol J."/>
            <person name="Climent J."/>
            <person name="Navarro P."/>
            <person name="Collado C."/>
            <person name="Perez-Perez A."/>
            <person name="Ottenwaelder B."/>
            <person name="Duchemin D."/>
            <person name="Cooke R."/>
            <person name="Laudie M."/>
            <person name="Berger-Llauro C."/>
            <person name="Purnelle B."/>
            <person name="Masuy D."/>
            <person name="de Haan M."/>
            <person name="Maarse A.C."/>
            <person name="Alcaraz J.-P."/>
            <person name="Cottet A."/>
            <person name="Casacuberta E."/>
            <person name="Monfort A."/>
            <person name="Argiriou A."/>
            <person name="Flores M."/>
            <person name="Liguori R."/>
            <person name="Vitale D."/>
            <person name="Mannhaupt G."/>
            <person name="Haase D."/>
            <person name="Schoof H."/>
            <person name="Rudd S."/>
            <person name="Zaccaria P."/>
            <person name="Mewes H.-W."/>
            <person name="Mayer K.F.X."/>
            <person name="Kaul S."/>
            <person name="Town C.D."/>
            <person name="Koo H.L."/>
            <person name="Tallon L.J."/>
            <person name="Jenkins J."/>
            <person name="Rooney T."/>
            <person name="Rizzo M."/>
            <person name="Walts A."/>
            <person name="Utterback T."/>
            <person name="Fujii C.Y."/>
            <person name="Shea T.P."/>
            <person name="Creasy T.H."/>
            <person name="Haas B."/>
            <person name="Maiti R."/>
            <person name="Wu D."/>
            <person name="Peterson J."/>
            <person name="Van Aken S."/>
            <person name="Pai G."/>
            <person name="Militscher J."/>
            <person name="Sellers P."/>
            <person name="Gill J.E."/>
            <person name="Feldblyum T.V."/>
            <person name="Preuss D."/>
            <person name="Lin X."/>
            <person name="Nierman W.C."/>
            <person name="Salzberg S.L."/>
            <person name="White O."/>
            <person name="Venter J.C."/>
            <person name="Fraser C.M."/>
            <person name="Kaneko T."/>
            <person name="Nakamura Y."/>
            <person name="Sato S."/>
            <person name="Kato T."/>
            <person name="Asamizu E."/>
            <person name="Sasamoto S."/>
            <person name="Kimura T."/>
            <person name="Idesawa K."/>
            <person name="Kawashima K."/>
            <person name="Kishida Y."/>
            <person name="Kiyokawa C."/>
            <person name="Kohara M."/>
            <person name="Matsumoto M."/>
            <person name="Matsuno A."/>
            <person name="Muraki A."/>
            <person name="Nakayama S."/>
            <person name="Nakazaki N."/>
            <person name="Shinpo S."/>
            <person name="Takeuchi C."/>
            <person name="Wada T."/>
            <person name="Watanabe A."/>
            <person name="Yamada M."/>
            <person name="Yasuda M."/>
            <person name="Tabata S."/>
        </authorList>
    </citation>
    <scope>NUCLEOTIDE SEQUENCE [LARGE SCALE GENOMIC DNA]</scope>
    <source>
        <strain>cv. Columbia</strain>
    </source>
</reference>
<reference key="2">
    <citation type="journal article" date="2017" name="Plant J.">
        <title>Araport11: a complete reannotation of the Arabidopsis thaliana reference genome.</title>
        <authorList>
            <person name="Cheng C.Y."/>
            <person name="Krishnakumar V."/>
            <person name="Chan A.P."/>
            <person name="Thibaud-Nissen F."/>
            <person name="Schobel S."/>
            <person name="Town C.D."/>
        </authorList>
    </citation>
    <scope>GENOME REANNOTATION</scope>
    <source>
        <strain>cv. Columbia</strain>
    </source>
</reference>
<reference key="3">
    <citation type="journal article" date="2003" name="Science">
        <title>Empirical analysis of transcriptional activity in the Arabidopsis genome.</title>
        <authorList>
            <person name="Yamada K."/>
            <person name="Lim J."/>
            <person name="Dale J.M."/>
            <person name="Chen H."/>
            <person name="Shinn P."/>
            <person name="Palm C.J."/>
            <person name="Southwick A.M."/>
            <person name="Wu H.C."/>
            <person name="Kim C.J."/>
            <person name="Nguyen M."/>
            <person name="Pham P.K."/>
            <person name="Cheuk R.F."/>
            <person name="Karlin-Newmann G."/>
            <person name="Liu S.X."/>
            <person name="Lam B."/>
            <person name="Sakano H."/>
            <person name="Wu T."/>
            <person name="Yu G."/>
            <person name="Miranda M."/>
            <person name="Quach H.L."/>
            <person name="Tripp M."/>
            <person name="Chang C.H."/>
            <person name="Lee J.M."/>
            <person name="Toriumi M.J."/>
            <person name="Chan M.M."/>
            <person name="Tang C.C."/>
            <person name="Onodera C.S."/>
            <person name="Deng J.M."/>
            <person name="Akiyama K."/>
            <person name="Ansari Y."/>
            <person name="Arakawa T."/>
            <person name="Banh J."/>
            <person name="Banno F."/>
            <person name="Bowser L."/>
            <person name="Brooks S.Y."/>
            <person name="Carninci P."/>
            <person name="Chao Q."/>
            <person name="Choy N."/>
            <person name="Enju A."/>
            <person name="Goldsmith A.D."/>
            <person name="Gurjal M."/>
            <person name="Hansen N.F."/>
            <person name="Hayashizaki Y."/>
            <person name="Johnson-Hopson C."/>
            <person name="Hsuan V.W."/>
            <person name="Iida K."/>
            <person name="Karnes M."/>
            <person name="Khan S."/>
            <person name="Koesema E."/>
            <person name="Ishida J."/>
            <person name="Jiang P.X."/>
            <person name="Jones T."/>
            <person name="Kawai J."/>
            <person name="Kamiya A."/>
            <person name="Meyers C."/>
            <person name="Nakajima M."/>
            <person name="Narusaka M."/>
            <person name="Seki M."/>
            <person name="Sakurai T."/>
            <person name="Satou M."/>
            <person name="Tamse R."/>
            <person name="Vaysberg M."/>
            <person name="Wallender E.K."/>
            <person name="Wong C."/>
            <person name="Yamamura Y."/>
            <person name="Yuan S."/>
            <person name="Shinozaki K."/>
            <person name="Davis R.W."/>
            <person name="Theologis A."/>
            <person name="Ecker J.R."/>
        </authorList>
    </citation>
    <scope>NUCLEOTIDE SEQUENCE [LARGE SCALE MRNA]</scope>
    <source>
        <strain>cv. Columbia</strain>
    </source>
</reference>
<reference key="4">
    <citation type="submission" date="2002-03" db="EMBL/GenBank/DDBJ databases">
        <title>Full-length cDNA from Arabidopsis thaliana.</title>
        <authorList>
            <person name="Brover V.V."/>
            <person name="Troukhan M.E."/>
            <person name="Alexandrov N.A."/>
            <person name="Lu Y.-P."/>
            <person name="Flavell R.B."/>
            <person name="Feldmann K.A."/>
        </authorList>
    </citation>
    <scope>NUCLEOTIDE SEQUENCE [LARGE SCALE MRNA]</scope>
</reference>
<reference key="5">
    <citation type="journal article" date="2003" name="Nucleic Acids Res.">
        <title>Ten members of the Arabidopsis gene family encoding methyl-CpG-binding domain proteins are transcriptionally active and at least one, AtMBD11, is crucial for normal development.</title>
        <authorList>
            <person name="Berg A."/>
            <person name="Meza T.J."/>
            <person name="Mahic M."/>
            <person name="Thorstensen T."/>
            <person name="Kristiansen K."/>
            <person name="Aalen R.B."/>
        </authorList>
    </citation>
    <scope>TISSUE SPECIFICITY</scope>
    <scope>GENE FAMILY</scope>
    <scope>NOMENCLATURE</scope>
</reference>
<reference key="6">
    <citation type="journal article" date="2003" name="Plant J.">
        <title>Characterization of Arabidopsis thaliana methyl-CpG-binding domain (MBD) proteins.</title>
        <authorList>
            <person name="Zemach A."/>
            <person name="Grafi G."/>
        </authorList>
    </citation>
    <scope>FUNCTION</scope>
</reference>
<reference key="7">
    <citation type="journal article" date="2003" name="Plant Mol. Biol.">
        <title>Arabidopsis MBD proteins show different binding specificities and nuclear localization.</title>
        <authorList>
            <person name="Scebba F."/>
            <person name="Bernacchia G."/>
            <person name="De Bastiani M."/>
            <person name="Evangelista M."/>
            <person name="Cantoni R.M."/>
            <person name="Cella R."/>
            <person name="Locci M.T."/>
            <person name="Pitto L."/>
        </authorList>
    </citation>
    <scope>FUNCTION</scope>
    <scope>SUBCELLULAR LOCATION</scope>
    <scope>TISSUE SPECIFICITY</scope>
    <source>
        <strain>cv. Columbia</strain>
    </source>
</reference>
<reference key="8">
    <citation type="journal article" date="2003" name="Plant Physiol.">
        <title>Methylated DNA-binding proteins from Arabidopsis.</title>
        <authorList>
            <person name="Ito M."/>
            <person name="Koike A."/>
            <person name="Koizumi N."/>
            <person name="Sano H."/>
        </authorList>
    </citation>
    <scope>FUNCTION</scope>
    <scope>SUBCELLULAR LOCATION</scope>
    <scope>TISSUE SPECIFICITY</scope>
</reference>
<reference key="9">
    <citation type="journal article" date="2005" name="Plant Cell">
        <title>DDM1 binds Arabidopsis methyl-CpG binding domain proteins and affects their subnuclear localization.</title>
        <authorList>
            <person name="Zemach A."/>
            <person name="Li Y."/>
            <person name="Wayburn B."/>
            <person name="Ben-Meir H."/>
            <person name="Kiss V."/>
            <person name="Avivi Y."/>
            <person name="Kalchenko V."/>
            <person name="Jacobsen S.E."/>
            <person name="Grafi G."/>
        </authorList>
    </citation>
    <scope>SUBCELLULAR LOCATION</scope>
    <scope>INTERACTION WITH DDM1</scope>
</reference>
<reference key="10">
    <citation type="journal article" date="2005" name="Plant Physiol.">
        <title>Evolutionary divergence of monocot and dicot methyl-CpG-binding domain proteins.</title>
        <authorList>
            <person name="Springer N.M."/>
            <person name="Kaeppler S.M."/>
        </authorList>
    </citation>
    <scope>GENE FAMILY</scope>
</reference>
<reference key="11">
    <citation type="journal article" date="2007" name="Trends Plant Sci.">
        <title>Methyl-CpG-binding domain proteins in plants: interpreters of DNA methylation.</title>
        <authorList>
            <person name="Zemach A."/>
            <person name="Grafi G."/>
        </authorList>
    </citation>
    <scope>SUBCELLULAR LOCATION</scope>
    <scope>REVIEW</scope>
</reference>
<reference key="12">
    <citation type="journal article" date="2008" name="J. Biol. Chem.">
        <title>The three methyl-CpG-binding domains of AtMBD7 control its subnuclear localization and mobility.</title>
        <authorList>
            <person name="Zemach A."/>
            <person name="Gaspan O."/>
            <person name="Grafi G."/>
        </authorList>
    </citation>
    <scope>SUBCELLULAR LOCATION</scope>
    <scope>DIMERIZATION</scope>
    <scope>INTERACTION WITH MBD6</scope>
</reference>
<name>MBD5_ARATH</name>
<protein>
    <recommendedName>
        <fullName>Methyl-CpG-binding domain-containing protein 5</fullName>
        <shortName>AtMBD5</shortName>
        <shortName>MBD05</shortName>
    </recommendedName>
    <alternativeName>
        <fullName>Methyl-CpG-binding protein MBD5</fullName>
    </alternativeName>
</protein>